<gene>
    <name evidence="1" type="primary">ispD</name>
    <name type="ordered locus">plu0713</name>
</gene>
<keyword id="KW-0414">Isoprene biosynthesis</keyword>
<keyword id="KW-0548">Nucleotidyltransferase</keyword>
<keyword id="KW-1185">Reference proteome</keyword>
<keyword id="KW-0808">Transferase</keyword>
<name>ISPD_PHOLL</name>
<accession>Q7N8K7</accession>
<reference key="1">
    <citation type="journal article" date="2003" name="Nat. Biotechnol.">
        <title>The genome sequence of the entomopathogenic bacterium Photorhabdus luminescens.</title>
        <authorList>
            <person name="Duchaud E."/>
            <person name="Rusniok C."/>
            <person name="Frangeul L."/>
            <person name="Buchrieser C."/>
            <person name="Givaudan A."/>
            <person name="Taourit S."/>
            <person name="Bocs S."/>
            <person name="Boursaux-Eude C."/>
            <person name="Chandler M."/>
            <person name="Charles J.-F."/>
            <person name="Dassa E."/>
            <person name="Derose R."/>
            <person name="Derzelle S."/>
            <person name="Freyssinet G."/>
            <person name="Gaudriault S."/>
            <person name="Medigue C."/>
            <person name="Lanois A."/>
            <person name="Powell K."/>
            <person name="Siguier P."/>
            <person name="Vincent R."/>
            <person name="Wingate V."/>
            <person name="Zouine M."/>
            <person name="Glaser P."/>
            <person name="Boemare N."/>
            <person name="Danchin A."/>
            <person name="Kunst F."/>
        </authorList>
    </citation>
    <scope>NUCLEOTIDE SEQUENCE [LARGE SCALE GENOMIC DNA]</scope>
    <source>
        <strain>DSM 15139 / CIP 105565 / TT01</strain>
    </source>
</reference>
<comment type="function">
    <text evidence="1">Catalyzes the formation of 4-diphosphocytidyl-2-C-methyl-D-erythritol from CTP and 2-C-methyl-D-erythritol 4-phosphate (MEP).</text>
</comment>
<comment type="catalytic activity">
    <reaction evidence="1">
        <text>2-C-methyl-D-erythritol 4-phosphate + CTP + H(+) = 4-CDP-2-C-methyl-D-erythritol + diphosphate</text>
        <dbReference type="Rhea" id="RHEA:13429"/>
        <dbReference type="ChEBI" id="CHEBI:15378"/>
        <dbReference type="ChEBI" id="CHEBI:33019"/>
        <dbReference type="ChEBI" id="CHEBI:37563"/>
        <dbReference type="ChEBI" id="CHEBI:57823"/>
        <dbReference type="ChEBI" id="CHEBI:58262"/>
        <dbReference type="EC" id="2.7.7.60"/>
    </reaction>
</comment>
<comment type="pathway">
    <text evidence="1">Isoprenoid biosynthesis; isopentenyl diphosphate biosynthesis via DXP pathway; isopentenyl diphosphate from 1-deoxy-D-xylulose 5-phosphate: step 2/6.</text>
</comment>
<comment type="subunit">
    <text evidence="1">Homodimer.</text>
</comment>
<comment type="similarity">
    <text evidence="1">Belongs to the IspD/TarI cytidylyltransferase family. IspD subfamily.</text>
</comment>
<feature type="chain" id="PRO_0000075598" description="2-C-methyl-D-erythritol 4-phosphate cytidylyltransferase">
    <location>
        <begin position="1"/>
        <end position="243"/>
    </location>
</feature>
<feature type="site" description="Transition state stabilizer" evidence="1">
    <location>
        <position position="24"/>
    </location>
</feature>
<feature type="site" description="Transition state stabilizer" evidence="1">
    <location>
        <position position="31"/>
    </location>
</feature>
<feature type="site" description="Positions MEP for the nucleophilic attack" evidence="1">
    <location>
        <position position="170"/>
    </location>
</feature>
<feature type="site" description="Positions MEP for the nucleophilic attack" evidence="1">
    <location>
        <position position="226"/>
    </location>
</feature>
<protein>
    <recommendedName>
        <fullName evidence="1">2-C-methyl-D-erythritol 4-phosphate cytidylyltransferase</fullName>
        <ecNumber evidence="1">2.7.7.60</ecNumber>
    </recommendedName>
    <alternativeName>
        <fullName evidence="1">4-diphosphocytidyl-2C-methyl-D-erythritol synthase</fullName>
    </alternativeName>
    <alternativeName>
        <fullName evidence="1">MEP cytidylyltransferase</fullName>
        <shortName evidence="1">MCT</shortName>
    </alternativeName>
</protein>
<evidence type="ECO:0000255" key="1">
    <source>
        <dbReference type="HAMAP-Rule" id="MF_00108"/>
    </source>
</evidence>
<proteinExistence type="inferred from homology"/>
<organism>
    <name type="scientific">Photorhabdus laumondii subsp. laumondii (strain DSM 15139 / CIP 105565 / TT01)</name>
    <name type="common">Photorhabdus luminescens subsp. laumondii</name>
    <dbReference type="NCBI Taxonomy" id="243265"/>
    <lineage>
        <taxon>Bacteria</taxon>
        <taxon>Pseudomonadati</taxon>
        <taxon>Pseudomonadota</taxon>
        <taxon>Gammaproteobacteria</taxon>
        <taxon>Enterobacterales</taxon>
        <taxon>Morganellaceae</taxon>
        <taxon>Photorhabdus</taxon>
    </lineage>
</organism>
<sequence length="243" mass="26704">MNNLLLRSSADIIALVPAAGIGSRMNSDCPKQYLSIAGKTIIEHTLSALLDHPRIRHVVIVLNPTDTQFQSLEVVSDSRITTVTGGEQRADSVLAGLNHLAHVTGNDNCWVLVHDAARPCLHHDDLDRLLQLAEADEQGNMACGGILASPVRDTMKRGRVGQIIDHTVERQDLWHALTPQFFPLMLLRDCLSKALSQHANITDEASALEYCGYQPVLVNGRSDNIKVTCPEDLALAEFYLSRK</sequence>
<dbReference type="EC" id="2.7.7.60" evidence="1"/>
<dbReference type="EMBL" id="BX571861">
    <property type="protein sequence ID" value="CAE13008.1"/>
    <property type="molecule type" value="Genomic_DNA"/>
</dbReference>
<dbReference type="RefSeq" id="WP_011145089.1">
    <property type="nucleotide sequence ID" value="NC_005126.1"/>
</dbReference>
<dbReference type="SMR" id="Q7N8K7"/>
<dbReference type="STRING" id="243265.plu0713"/>
<dbReference type="GeneID" id="48847008"/>
<dbReference type="KEGG" id="plu:plu0713"/>
<dbReference type="eggNOG" id="COG1211">
    <property type="taxonomic scope" value="Bacteria"/>
</dbReference>
<dbReference type="HOGENOM" id="CLU_061281_3_1_6"/>
<dbReference type="OrthoDB" id="9806837at2"/>
<dbReference type="UniPathway" id="UPA00056">
    <property type="reaction ID" value="UER00093"/>
</dbReference>
<dbReference type="Proteomes" id="UP000002514">
    <property type="component" value="Chromosome"/>
</dbReference>
<dbReference type="GO" id="GO:0050518">
    <property type="term" value="F:2-C-methyl-D-erythritol 4-phosphate cytidylyltransferase activity"/>
    <property type="evidence" value="ECO:0007669"/>
    <property type="project" value="UniProtKB-UniRule"/>
</dbReference>
<dbReference type="GO" id="GO:0019288">
    <property type="term" value="P:isopentenyl diphosphate biosynthetic process, methylerythritol 4-phosphate pathway"/>
    <property type="evidence" value="ECO:0007669"/>
    <property type="project" value="UniProtKB-UniRule"/>
</dbReference>
<dbReference type="CDD" id="cd02516">
    <property type="entry name" value="CDP-ME_synthetase"/>
    <property type="match status" value="1"/>
</dbReference>
<dbReference type="FunFam" id="3.90.550.10:FF:000003">
    <property type="entry name" value="2-C-methyl-D-erythritol 4-phosphate cytidylyltransferase"/>
    <property type="match status" value="1"/>
</dbReference>
<dbReference type="Gene3D" id="3.90.550.10">
    <property type="entry name" value="Spore Coat Polysaccharide Biosynthesis Protein SpsA, Chain A"/>
    <property type="match status" value="1"/>
</dbReference>
<dbReference type="HAMAP" id="MF_00108">
    <property type="entry name" value="IspD"/>
    <property type="match status" value="1"/>
</dbReference>
<dbReference type="InterPro" id="IPR001228">
    <property type="entry name" value="IspD"/>
</dbReference>
<dbReference type="InterPro" id="IPR034683">
    <property type="entry name" value="IspD/TarI"/>
</dbReference>
<dbReference type="InterPro" id="IPR050088">
    <property type="entry name" value="IspD/TarI_cytidylyltransf_bact"/>
</dbReference>
<dbReference type="InterPro" id="IPR018294">
    <property type="entry name" value="ISPD_synthase_CS"/>
</dbReference>
<dbReference type="InterPro" id="IPR029044">
    <property type="entry name" value="Nucleotide-diphossugar_trans"/>
</dbReference>
<dbReference type="NCBIfam" id="TIGR00453">
    <property type="entry name" value="ispD"/>
    <property type="match status" value="1"/>
</dbReference>
<dbReference type="PANTHER" id="PTHR32125">
    <property type="entry name" value="2-C-METHYL-D-ERYTHRITOL 4-PHOSPHATE CYTIDYLYLTRANSFERASE, CHLOROPLASTIC"/>
    <property type="match status" value="1"/>
</dbReference>
<dbReference type="PANTHER" id="PTHR32125:SF4">
    <property type="entry name" value="2-C-METHYL-D-ERYTHRITOL 4-PHOSPHATE CYTIDYLYLTRANSFERASE, CHLOROPLASTIC"/>
    <property type="match status" value="1"/>
</dbReference>
<dbReference type="Pfam" id="PF01128">
    <property type="entry name" value="IspD"/>
    <property type="match status" value="1"/>
</dbReference>
<dbReference type="SUPFAM" id="SSF53448">
    <property type="entry name" value="Nucleotide-diphospho-sugar transferases"/>
    <property type="match status" value="1"/>
</dbReference>
<dbReference type="PROSITE" id="PS01295">
    <property type="entry name" value="ISPD"/>
    <property type="match status" value="1"/>
</dbReference>